<feature type="chain" id="PRO_1000145853" description="DNA integrity scanning protein DisA">
    <location>
        <begin position="1"/>
        <end position="357"/>
    </location>
</feature>
<feature type="domain" description="DAC" evidence="2">
    <location>
        <begin position="8"/>
        <end position="146"/>
    </location>
</feature>
<feature type="binding site" evidence="1">
    <location>
        <position position="75"/>
    </location>
    <ligand>
        <name>ATP</name>
        <dbReference type="ChEBI" id="CHEBI:30616"/>
    </ligand>
</feature>
<feature type="binding site" evidence="1">
    <location>
        <position position="93"/>
    </location>
    <ligand>
        <name>ATP</name>
        <dbReference type="ChEBI" id="CHEBI:30616"/>
    </ligand>
</feature>
<feature type="binding site" evidence="1">
    <location>
        <begin position="106"/>
        <end position="110"/>
    </location>
    <ligand>
        <name>ATP</name>
        <dbReference type="ChEBI" id="CHEBI:30616"/>
    </ligand>
</feature>
<name>DISA_BACC2</name>
<dbReference type="EC" id="2.7.7.85" evidence="1"/>
<dbReference type="EMBL" id="CP001186">
    <property type="protein sequence ID" value="ACK95536.1"/>
    <property type="molecule type" value="Genomic_DNA"/>
</dbReference>
<dbReference type="RefSeq" id="WP_000392164.1">
    <property type="nucleotide sequence ID" value="NC_011772.1"/>
</dbReference>
<dbReference type="SMR" id="B7ISZ3"/>
<dbReference type="GeneID" id="72446901"/>
<dbReference type="KEGG" id="bcg:BCG9842_B5222"/>
<dbReference type="HOGENOM" id="CLU_787128_0_0_9"/>
<dbReference type="Proteomes" id="UP000006744">
    <property type="component" value="Chromosome"/>
</dbReference>
<dbReference type="GO" id="GO:0004016">
    <property type="term" value="F:adenylate cyclase activity"/>
    <property type="evidence" value="ECO:0007669"/>
    <property type="project" value="TreeGrafter"/>
</dbReference>
<dbReference type="GO" id="GO:0005524">
    <property type="term" value="F:ATP binding"/>
    <property type="evidence" value="ECO:0007669"/>
    <property type="project" value="UniProtKB-UniRule"/>
</dbReference>
<dbReference type="GO" id="GO:0106408">
    <property type="term" value="F:diadenylate cyclase activity"/>
    <property type="evidence" value="ECO:0007669"/>
    <property type="project" value="UniProtKB-EC"/>
</dbReference>
<dbReference type="GO" id="GO:0003677">
    <property type="term" value="F:DNA binding"/>
    <property type="evidence" value="ECO:0007669"/>
    <property type="project" value="UniProtKB-UniRule"/>
</dbReference>
<dbReference type="GO" id="GO:0006281">
    <property type="term" value="P:DNA repair"/>
    <property type="evidence" value="ECO:0007669"/>
    <property type="project" value="UniProtKB-UniRule"/>
</dbReference>
<dbReference type="FunFam" id="1.10.150.20:FF:000023">
    <property type="entry name" value="DNA integrity scanning protein DisA"/>
    <property type="match status" value="1"/>
</dbReference>
<dbReference type="FunFam" id="1.20.1260.110:FF:000001">
    <property type="entry name" value="DNA integrity scanning protein DisA"/>
    <property type="match status" value="1"/>
</dbReference>
<dbReference type="FunFam" id="3.40.1700.10:FF:000001">
    <property type="entry name" value="DNA integrity scanning protein DisA"/>
    <property type="match status" value="1"/>
</dbReference>
<dbReference type="Gene3D" id="1.10.150.20">
    <property type="entry name" value="5' to 3' exonuclease, C-terminal subdomain"/>
    <property type="match status" value="1"/>
</dbReference>
<dbReference type="Gene3D" id="1.20.1260.110">
    <property type="entry name" value="DNA integrity scanning linker region"/>
    <property type="match status" value="1"/>
</dbReference>
<dbReference type="Gene3D" id="3.40.1700.10">
    <property type="entry name" value="DNA integrity scanning protein, DisA, N-terminal domain"/>
    <property type="match status" value="1"/>
</dbReference>
<dbReference type="HAMAP" id="MF_01438">
    <property type="entry name" value="DisA"/>
    <property type="match status" value="1"/>
</dbReference>
<dbReference type="InterPro" id="IPR050338">
    <property type="entry name" value="DisA"/>
</dbReference>
<dbReference type="InterPro" id="IPR038331">
    <property type="entry name" value="DisA_sf"/>
</dbReference>
<dbReference type="InterPro" id="IPR036888">
    <property type="entry name" value="DNA_integrity_DisA_N_sf"/>
</dbReference>
<dbReference type="InterPro" id="IPR018906">
    <property type="entry name" value="DNA_integrity_scan_DisA_link"/>
</dbReference>
<dbReference type="InterPro" id="IPR003390">
    <property type="entry name" value="DNA_integrity_scan_DisA_N"/>
</dbReference>
<dbReference type="InterPro" id="IPR023763">
    <property type="entry name" value="DNA_integrity_scanning_protein"/>
</dbReference>
<dbReference type="InterPro" id="IPR010994">
    <property type="entry name" value="RuvA_2-like"/>
</dbReference>
<dbReference type="NCBIfam" id="NF010009">
    <property type="entry name" value="PRK13482.1"/>
    <property type="match status" value="1"/>
</dbReference>
<dbReference type="PANTHER" id="PTHR34185">
    <property type="entry name" value="DIADENYLATE CYCLASE"/>
    <property type="match status" value="1"/>
</dbReference>
<dbReference type="PANTHER" id="PTHR34185:SF3">
    <property type="entry name" value="DNA INTEGRITY SCANNING PROTEIN DISA"/>
    <property type="match status" value="1"/>
</dbReference>
<dbReference type="Pfam" id="PF02457">
    <property type="entry name" value="DAC"/>
    <property type="match status" value="1"/>
</dbReference>
<dbReference type="Pfam" id="PF10635">
    <property type="entry name" value="DisA-linker"/>
    <property type="match status" value="1"/>
</dbReference>
<dbReference type="SUPFAM" id="SSF47781">
    <property type="entry name" value="RuvA domain 2-like"/>
    <property type="match status" value="1"/>
</dbReference>
<dbReference type="SUPFAM" id="SSF143597">
    <property type="entry name" value="YojJ-like"/>
    <property type="match status" value="1"/>
</dbReference>
<dbReference type="PROSITE" id="PS51794">
    <property type="entry name" value="DAC"/>
    <property type="match status" value="1"/>
</dbReference>
<comment type="function">
    <text evidence="1">Participates in a DNA-damage check-point that is active prior to asymmetric division when DNA is damaged. DisA forms globular foci that rapidly scan along the chromosomes during sporulation, searching for lesions. When a lesion is present, DisA pauses at the lesion site. This triggers a cellular response that culminates in a temporary block in sporulation initiation.</text>
</comment>
<comment type="function">
    <text evidence="1">Also has diadenylate cyclase activity, catalyzing the condensation of 2 ATP molecules into cyclic di-AMP (c-di-AMP). c-di-AMP acts as a signaling molecule that couples DNA integrity with progression of sporulation. The rise in c-di-AMP level generated by DisA while scanning the chromosome, operates as a positive signal that advances sporulation; upon encountering a lesion, the DisA focus arrests at the damaged site and halts c-di-AMP synthesis.</text>
</comment>
<comment type="catalytic activity">
    <reaction evidence="1">
        <text>2 ATP = 3',3'-c-di-AMP + 2 diphosphate</text>
        <dbReference type="Rhea" id="RHEA:35655"/>
        <dbReference type="ChEBI" id="CHEBI:30616"/>
        <dbReference type="ChEBI" id="CHEBI:33019"/>
        <dbReference type="ChEBI" id="CHEBI:71500"/>
        <dbReference type="EC" id="2.7.7.85"/>
    </reaction>
</comment>
<comment type="cofactor">
    <cofactor evidence="1">
        <name>Mg(2+)</name>
        <dbReference type="ChEBI" id="CHEBI:18420"/>
    </cofactor>
</comment>
<comment type="subunit">
    <text evidence="1">Homooctamer.</text>
</comment>
<comment type="similarity">
    <text evidence="1">Belongs to the DisA family.</text>
</comment>
<organism>
    <name type="scientific">Bacillus cereus (strain G9842)</name>
    <dbReference type="NCBI Taxonomy" id="405531"/>
    <lineage>
        <taxon>Bacteria</taxon>
        <taxon>Bacillati</taxon>
        <taxon>Bacillota</taxon>
        <taxon>Bacilli</taxon>
        <taxon>Bacillales</taxon>
        <taxon>Bacillaceae</taxon>
        <taxon>Bacillus</taxon>
        <taxon>Bacillus cereus group</taxon>
    </lineage>
</organism>
<proteinExistence type="inferred from homology"/>
<sequence>MEENKQRVKSMINILQLVAPGTPLREGIDNVLRAQTGGLIVLGYNEQIKSIVDGGFHINCAFSPASLYELAKMDGALILNETGSKILIANAQLVPEASIDSIETGMRHRTAERVAKQTGSLVVAISQRRNVITLYQGNLRYTLKDIGVILTKANQAIQTLEKYKAVWNDGITNLGILEFEEVVTMSEVVHVLHSVEMVLRIKNEILSYIHELGTEGRLIRLQLTELLADLEAEAALLIKDYHQEKTQDHHQILKKLQDLANTQLLEDSDLVKLLGYPGQTSLEESVTPRGYRITSKISRVPPLIIENLINRFKTLQGVCRATIHELDDVEGIGEVRAKKIREGLKRIQEHLYMSRHN</sequence>
<accession>B7ISZ3</accession>
<keyword id="KW-0067">ATP-binding</keyword>
<keyword id="KW-0227">DNA damage</keyword>
<keyword id="KW-0234">DNA repair</keyword>
<keyword id="KW-0238">DNA-binding</keyword>
<keyword id="KW-0460">Magnesium</keyword>
<keyword id="KW-0547">Nucleotide-binding</keyword>
<keyword id="KW-0548">Nucleotidyltransferase</keyword>
<keyword id="KW-0808">Transferase</keyword>
<evidence type="ECO:0000255" key="1">
    <source>
        <dbReference type="HAMAP-Rule" id="MF_01438"/>
    </source>
</evidence>
<evidence type="ECO:0000255" key="2">
    <source>
        <dbReference type="PROSITE-ProRule" id="PRU01130"/>
    </source>
</evidence>
<gene>
    <name evidence="1" type="primary">disA</name>
    <name type="ordered locus">BCG9842_B5222</name>
</gene>
<reference key="1">
    <citation type="submission" date="2008-10" db="EMBL/GenBank/DDBJ databases">
        <title>Genome sequence of Bacillus cereus G9842.</title>
        <authorList>
            <person name="Dodson R.J."/>
            <person name="Durkin A.S."/>
            <person name="Rosovitz M.J."/>
            <person name="Rasko D.A."/>
            <person name="Hoffmaster A."/>
            <person name="Ravel J."/>
            <person name="Sutton G."/>
        </authorList>
    </citation>
    <scope>NUCLEOTIDE SEQUENCE [LARGE SCALE GENOMIC DNA]</scope>
    <source>
        <strain>G9842</strain>
    </source>
</reference>
<protein>
    <recommendedName>
        <fullName evidence="1">DNA integrity scanning protein DisA</fullName>
    </recommendedName>
    <alternativeName>
        <fullName evidence="1">Cyclic di-AMP synthase</fullName>
        <shortName evidence="1">c-di-AMP synthase</shortName>
    </alternativeName>
    <alternativeName>
        <fullName evidence="1">Diadenylate cyclase</fullName>
        <ecNumber evidence="1">2.7.7.85</ecNumber>
    </alternativeName>
</protein>